<sequence>MLHYSNCNKICEKTVMNQRTIKTAIAVTGTGLHSGQPVDLEFQPQPIDTGIVFERSDIVGSTPIPASAFLVQDTMMSSNLVFGGTRVGTVEHLLSAIAGLGVDNLLIRVSASEIPIMDGSAAPFVGLLLQAGLCEQDALKKFIRIVRTVRVKVDDKWAELRPYSGFELNFEIDFDHPAIDKDFQHAQLQFSTQNFIEQLSSARTFGFLRDIEAMRQNNLALGGSMDNAIVIDEANILNEEGLRFNDEFVRHKILDALGDLYLIGYPILGRFNAYKSGHALNNLLVREILSDHNNFEIVTFDDNVTCPIEYLPLNGITVEG</sequence>
<keyword id="KW-0378">Hydrolase</keyword>
<keyword id="KW-0441">Lipid A biosynthesis</keyword>
<keyword id="KW-0444">Lipid biosynthesis</keyword>
<keyword id="KW-0443">Lipid metabolism</keyword>
<keyword id="KW-0479">Metal-binding</keyword>
<keyword id="KW-1185">Reference proteome</keyword>
<keyword id="KW-0862">Zinc</keyword>
<name>LPXC_PSYA2</name>
<feature type="chain" id="PRO_0000253687" description="UDP-3-O-acyl-N-acetylglucosamine deacetylase">
    <location>
        <begin position="1"/>
        <end position="320"/>
    </location>
</feature>
<feature type="active site" description="Proton donor" evidence="1">
    <location>
        <position position="278"/>
    </location>
</feature>
<feature type="binding site" evidence="1">
    <location>
        <position position="92"/>
    </location>
    <ligand>
        <name>Zn(2+)</name>
        <dbReference type="ChEBI" id="CHEBI:29105"/>
    </ligand>
</feature>
<feature type="binding site" evidence="1">
    <location>
        <position position="251"/>
    </location>
    <ligand>
        <name>Zn(2+)</name>
        <dbReference type="ChEBI" id="CHEBI:29105"/>
    </ligand>
</feature>
<feature type="binding site" evidence="1">
    <location>
        <position position="255"/>
    </location>
    <ligand>
        <name>Zn(2+)</name>
        <dbReference type="ChEBI" id="CHEBI:29105"/>
    </ligand>
</feature>
<reference key="1">
    <citation type="journal article" date="2010" name="Appl. Environ. Microbiol.">
        <title>The genome sequence of Psychrobacter arcticus 273-4, a psychroactive Siberian permafrost bacterium, reveals mechanisms for adaptation to low-temperature growth.</title>
        <authorList>
            <person name="Ayala-del-Rio H.L."/>
            <person name="Chain P.S."/>
            <person name="Grzymski J.J."/>
            <person name="Ponder M.A."/>
            <person name="Ivanova N."/>
            <person name="Bergholz P.W."/>
            <person name="Di Bartolo G."/>
            <person name="Hauser L."/>
            <person name="Land M."/>
            <person name="Bakermans C."/>
            <person name="Rodrigues D."/>
            <person name="Klappenbach J."/>
            <person name="Zarka D."/>
            <person name="Larimer F."/>
            <person name="Richardson P."/>
            <person name="Murray A."/>
            <person name="Thomashow M."/>
            <person name="Tiedje J.M."/>
        </authorList>
    </citation>
    <scope>NUCLEOTIDE SEQUENCE [LARGE SCALE GENOMIC DNA]</scope>
    <source>
        <strain>DSM 17307 / VKM B-2377 / 273-4</strain>
    </source>
</reference>
<comment type="function">
    <text evidence="1">Catalyzes the hydrolysis of UDP-3-O-myristoyl-N-acetylglucosamine to form UDP-3-O-myristoylglucosamine and acetate, the committed step in lipid A biosynthesis.</text>
</comment>
<comment type="catalytic activity">
    <reaction evidence="1">
        <text>a UDP-3-O-[(3R)-3-hydroxyacyl]-N-acetyl-alpha-D-glucosamine + H2O = a UDP-3-O-[(3R)-3-hydroxyacyl]-alpha-D-glucosamine + acetate</text>
        <dbReference type="Rhea" id="RHEA:67816"/>
        <dbReference type="ChEBI" id="CHEBI:15377"/>
        <dbReference type="ChEBI" id="CHEBI:30089"/>
        <dbReference type="ChEBI" id="CHEBI:137740"/>
        <dbReference type="ChEBI" id="CHEBI:173225"/>
        <dbReference type="EC" id="3.5.1.108"/>
    </reaction>
</comment>
<comment type="cofactor">
    <cofactor evidence="1">
        <name>Zn(2+)</name>
        <dbReference type="ChEBI" id="CHEBI:29105"/>
    </cofactor>
</comment>
<comment type="pathway">
    <text evidence="1">Glycolipid biosynthesis; lipid IV(A) biosynthesis; lipid IV(A) from (3R)-3-hydroxytetradecanoyl-[acyl-carrier-protein] and UDP-N-acetyl-alpha-D-glucosamine: step 2/6.</text>
</comment>
<comment type="similarity">
    <text evidence="1">Belongs to the LpxC family.</text>
</comment>
<gene>
    <name evidence="1" type="primary">lpxC</name>
    <name type="ordered locus">Psyc_1744</name>
</gene>
<evidence type="ECO:0000255" key="1">
    <source>
        <dbReference type="HAMAP-Rule" id="MF_00388"/>
    </source>
</evidence>
<protein>
    <recommendedName>
        <fullName evidence="1">UDP-3-O-acyl-N-acetylglucosamine deacetylase</fullName>
        <shortName evidence="1">UDP-3-O-acyl-GlcNAc deacetylase</shortName>
        <ecNumber evidence="1">3.5.1.108</ecNumber>
    </recommendedName>
    <alternativeName>
        <fullName evidence="1">UDP-3-O-[R-3-hydroxymyristoyl]-N-acetylglucosamine deacetylase</fullName>
    </alternativeName>
</protein>
<accession>Q4FQW6</accession>
<dbReference type="EC" id="3.5.1.108" evidence="1"/>
<dbReference type="EMBL" id="CP000082">
    <property type="protein sequence ID" value="AAZ19592.1"/>
    <property type="molecule type" value="Genomic_DNA"/>
</dbReference>
<dbReference type="SMR" id="Q4FQW6"/>
<dbReference type="STRING" id="259536.Psyc_1744"/>
<dbReference type="KEGG" id="par:Psyc_1744"/>
<dbReference type="eggNOG" id="COG0774">
    <property type="taxonomic scope" value="Bacteria"/>
</dbReference>
<dbReference type="HOGENOM" id="CLU_046528_1_0_6"/>
<dbReference type="OrthoDB" id="9802746at2"/>
<dbReference type="UniPathway" id="UPA00359">
    <property type="reaction ID" value="UER00478"/>
</dbReference>
<dbReference type="Proteomes" id="UP000000546">
    <property type="component" value="Chromosome"/>
</dbReference>
<dbReference type="GO" id="GO:0016020">
    <property type="term" value="C:membrane"/>
    <property type="evidence" value="ECO:0007669"/>
    <property type="project" value="GOC"/>
</dbReference>
<dbReference type="GO" id="GO:0046872">
    <property type="term" value="F:metal ion binding"/>
    <property type="evidence" value="ECO:0007669"/>
    <property type="project" value="UniProtKB-KW"/>
</dbReference>
<dbReference type="GO" id="GO:0103117">
    <property type="term" value="F:UDP-3-O-acyl-N-acetylglucosamine deacetylase activity"/>
    <property type="evidence" value="ECO:0007669"/>
    <property type="project" value="UniProtKB-UniRule"/>
</dbReference>
<dbReference type="GO" id="GO:0009245">
    <property type="term" value="P:lipid A biosynthetic process"/>
    <property type="evidence" value="ECO:0007669"/>
    <property type="project" value="UniProtKB-UniRule"/>
</dbReference>
<dbReference type="Gene3D" id="3.30.230.20">
    <property type="entry name" value="lpxc deacetylase, domain 1"/>
    <property type="match status" value="1"/>
</dbReference>
<dbReference type="Gene3D" id="3.30.1700.10">
    <property type="entry name" value="lpxc deacetylase, domain 2"/>
    <property type="match status" value="1"/>
</dbReference>
<dbReference type="HAMAP" id="MF_00388">
    <property type="entry name" value="LpxC"/>
    <property type="match status" value="1"/>
</dbReference>
<dbReference type="InterPro" id="IPR020568">
    <property type="entry name" value="Ribosomal_Su5_D2-typ_SF"/>
</dbReference>
<dbReference type="InterPro" id="IPR004463">
    <property type="entry name" value="UDP-acyl_GlcNac_deAcase"/>
</dbReference>
<dbReference type="InterPro" id="IPR011334">
    <property type="entry name" value="UDP-acyl_GlcNac_deAcase_C"/>
</dbReference>
<dbReference type="InterPro" id="IPR015870">
    <property type="entry name" value="UDP-acyl_N-AcGlcN_deAcase_N"/>
</dbReference>
<dbReference type="NCBIfam" id="TIGR00325">
    <property type="entry name" value="lpxC"/>
    <property type="match status" value="1"/>
</dbReference>
<dbReference type="PANTHER" id="PTHR33694">
    <property type="entry name" value="UDP-3-O-ACYL-N-ACETYLGLUCOSAMINE DEACETYLASE 1, MITOCHONDRIAL-RELATED"/>
    <property type="match status" value="1"/>
</dbReference>
<dbReference type="PANTHER" id="PTHR33694:SF1">
    <property type="entry name" value="UDP-3-O-ACYL-N-ACETYLGLUCOSAMINE DEACETYLASE 1, MITOCHONDRIAL-RELATED"/>
    <property type="match status" value="1"/>
</dbReference>
<dbReference type="Pfam" id="PF03331">
    <property type="entry name" value="LpxC"/>
    <property type="match status" value="1"/>
</dbReference>
<dbReference type="SUPFAM" id="SSF54211">
    <property type="entry name" value="Ribosomal protein S5 domain 2-like"/>
    <property type="match status" value="2"/>
</dbReference>
<proteinExistence type="inferred from homology"/>
<organism>
    <name type="scientific">Psychrobacter arcticus (strain DSM 17307 / VKM B-2377 / 273-4)</name>
    <dbReference type="NCBI Taxonomy" id="259536"/>
    <lineage>
        <taxon>Bacteria</taxon>
        <taxon>Pseudomonadati</taxon>
        <taxon>Pseudomonadota</taxon>
        <taxon>Gammaproteobacteria</taxon>
        <taxon>Moraxellales</taxon>
        <taxon>Moraxellaceae</taxon>
        <taxon>Psychrobacter</taxon>
    </lineage>
</organism>